<evidence type="ECO:0000255" key="1">
    <source>
        <dbReference type="HAMAP-Rule" id="MF_01325"/>
    </source>
</evidence>
<evidence type="ECO:0000305" key="2"/>
<name>RL3_GEODF</name>
<accession>B9M6U5</accession>
<feature type="chain" id="PRO_1000165887" description="Large ribosomal subunit protein uL3">
    <location>
        <begin position="1"/>
        <end position="211"/>
    </location>
</feature>
<sequence>MNKGLIGKKIGMTQIFADDGRRIPVTVVEAGPCVVIQKKTKEKDGYNAIQVGFDAKEAAKANSATVGHCKAAGSGAFSFFRELRVDNVDSYNVGDVLNADLFAAGDVIDVTGTSIGKGFQGVIKRWGFKGGRSSHGSRFHRAPGSIGCSATPSRVFKNKKMPGQLGNERVTVQRLKVVRVDAADNLILVGGAIPGSTNGLVFIKDSVKAKK</sequence>
<organism>
    <name type="scientific">Geotalea daltonii (strain DSM 22248 / JCM 15807 / FRC-32)</name>
    <name type="common">Geobacter daltonii</name>
    <dbReference type="NCBI Taxonomy" id="316067"/>
    <lineage>
        <taxon>Bacteria</taxon>
        <taxon>Pseudomonadati</taxon>
        <taxon>Thermodesulfobacteriota</taxon>
        <taxon>Desulfuromonadia</taxon>
        <taxon>Geobacterales</taxon>
        <taxon>Geobacteraceae</taxon>
        <taxon>Geotalea</taxon>
    </lineage>
</organism>
<keyword id="KW-1185">Reference proteome</keyword>
<keyword id="KW-0687">Ribonucleoprotein</keyword>
<keyword id="KW-0689">Ribosomal protein</keyword>
<keyword id="KW-0694">RNA-binding</keyword>
<keyword id="KW-0699">rRNA-binding</keyword>
<reference key="1">
    <citation type="submission" date="2009-01" db="EMBL/GenBank/DDBJ databases">
        <title>Complete sequence of Geobacter sp. FRC-32.</title>
        <authorList>
            <consortium name="US DOE Joint Genome Institute"/>
            <person name="Lucas S."/>
            <person name="Copeland A."/>
            <person name="Lapidus A."/>
            <person name="Glavina del Rio T."/>
            <person name="Dalin E."/>
            <person name="Tice H."/>
            <person name="Bruce D."/>
            <person name="Goodwin L."/>
            <person name="Pitluck S."/>
            <person name="Saunders E."/>
            <person name="Brettin T."/>
            <person name="Detter J.C."/>
            <person name="Han C."/>
            <person name="Larimer F."/>
            <person name="Land M."/>
            <person name="Hauser L."/>
            <person name="Kyrpides N."/>
            <person name="Ovchinnikova G."/>
            <person name="Kostka J."/>
            <person name="Richardson P."/>
        </authorList>
    </citation>
    <scope>NUCLEOTIDE SEQUENCE [LARGE SCALE GENOMIC DNA]</scope>
    <source>
        <strain>DSM 22248 / JCM 15807 / FRC-32</strain>
    </source>
</reference>
<proteinExistence type="inferred from homology"/>
<gene>
    <name evidence="1" type="primary">rplC</name>
    <name type="ordered locus">Geob_3625</name>
</gene>
<dbReference type="EMBL" id="CP001390">
    <property type="protein sequence ID" value="ACM21966.1"/>
    <property type="molecule type" value="Genomic_DNA"/>
</dbReference>
<dbReference type="RefSeq" id="WP_012648693.1">
    <property type="nucleotide sequence ID" value="NC_011979.1"/>
</dbReference>
<dbReference type="SMR" id="B9M6U5"/>
<dbReference type="STRING" id="316067.Geob_3625"/>
<dbReference type="KEGG" id="geo:Geob_3625"/>
<dbReference type="eggNOG" id="COG0087">
    <property type="taxonomic scope" value="Bacteria"/>
</dbReference>
<dbReference type="HOGENOM" id="CLU_044142_4_1_7"/>
<dbReference type="OrthoDB" id="9806135at2"/>
<dbReference type="Proteomes" id="UP000007721">
    <property type="component" value="Chromosome"/>
</dbReference>
<dbReference type="GO" id="GO:0022625">
    <property type="term" value="C:cytosolic large ribosomal subunit"/>
    <property type="evidence" value="ECO:0007669"/>
    <property type="project" value="TreeGrafter"/>
</dbReference>
<dbReference type="GO" id="GO:0019843">
    <property type="term" value="F:rRNA binding"/>
    <property type="evidence" value="ECO:0007669"/>
    <property type="project" value="UniProtKB-UniRule"/>
</dbReference>
<dbReference type="GO" id="GO:0003735">
    <property type="term" value="F:structural constituent of ribosome"/>
    <property type="evidence" value="ECO:0007669"/>
    <property type="project" value="InterPro"/>
</dbReference>
<dbReference type="GO" id="GO:0006412">
    <property type="term" value="P:translation"/>
    <property type="evidence" value="ECO:0007669"/>
    <property type="project" value="UniProtKB-UniRule"/>
</dbReference>
<dbReference type="FunFam" id="2.40.30.10:FF:000004">
    <property type="entry name" value="50S ribosomal protein L3"/>
    <property type="match status" value="1"/>
</dbReference>
<dbReference type="FunFam" id="3.30.160.810:FF:000001">
    <property type="entry name" value="50S ribosomal protein L3"/>
    <property type="match status" value="1"/>
</dbReference>
<dbReference type="Gene3D" id="3.30.160.810">
    <property type="match status" value="1"/>
</dbReference>
<dbReference type="Gene3D" id="2.40.30.10">
    <property type="entry name" value="Translation factors"/>
    <property type="match status" value="1"/>
</dbReference>
<dbReference type="HAMAP" id="MF_01325_B">
    <property type="entry name" value="Ribosomal_uL3_B"/>
    <property type="match status" value="1"/>
</dbReference>
<dbReference type="InterPro" id="IPR000597">
    <property type="entry name" value="Ribosomal_uL3"/>
</dbReference>
<dbReference type="InterPro" id="IPR019927">
    <property type="entry name" value="Ribosomal_uL3_bac/org-type"/>
</dbReference>
<dbReference type="InterPro" id="IPR019926">
    <property type="entry name" value="Ribosomal_uL3_CS"/>
</dbReference>
<dbReference type="InterPro" id="IPR009000">
    <property type="entry name" value="Transl_B-barrel_sf"/>
</dbReference>
<dbReference type="NCBIfam" id="TIGR03625">
    <property type="entry name" value="L3_bact"/>
    <property type="match status" value="1"/>
</dbReference>
<dbReference type="PANTHER" id="PTHR11229">
    <property type="entry name" value="50S RIBOSOMAL PROTEIN L3"/>
    <property type="match status" value="1"/>
</dbReference>
<dbReference type="PANTHER" id="PTHR11229:SF16">
    <property type="entry name" value="LARGE RIBOSOMAL SUBUNIT PROTEIN UL3C"/>
    <property type="match status" value="1"/>
</dbReference>
<dbReference type="Pfam" id="PF00297">
    <property type="entry name" value="Ribosomal_L3"/>
    <property type="match status" value="1"/>
</dbReference>
<dbReference type="SUPFAM" id="SSF50447">
    <property type="entry name" value="Translation proteins"/>
    <property type="match status" value="1"/>
</dbReference>
<dbReference type="PROSITE" id="PS00474">
    <property type="entry name" value="RIBOSOMAL_L3"/>
    <property type="match status" value="1"/>
</dbReference>
<comment type="function">
    <text evidence="1">One of the primary rRNA binding proteins, it binds directly near the 3'-end of the 23S rRNA, where it nucleates assembly of the 50S subunit.</text>
</comment>
<comment type="subunit">
    <text evidence="1">Part of the 50S ribosomal subunit. Forms a cluster with proteins L14 and L19.</text>
</comment>
<comment type="similarity">
    <text evidence="1">Belongs to the universal ribosomal protein uL3 family.</text>
</comment>
<protein>
    <recommendedName>
        <fullName evidence="1">Large ribosomal subunit protein uL3</fullName>
    </recommendedName>
    <alternativeName>
        <fullName evidence="2">50S ribosomal protein L3</fullName>
    </alternativeName>
</protein>